<proteinExistence type="inferred from homology"/>
<feature type="chain" id="PRO_0000428333" description="Transcriptional regulatory protein KdpE">
    <location>
        <begin position="1"/>
        <end position="226"/>
    </location>
</feature>
<feature type="domain" description="Response regulatory" evidence="3">
    <location>
        <begin position="3"/>
        <end position="116"/>
    </location>
</feature>
<feature type="DNA-binding region" description="OmpR/PhoB-type" evidence="4">
    <location>
        <begin position="127"/>
        <end position="226"/>
    </location>
</feature>
<feature type="modified residue" description="4-aspartylphosphate" evidence="2 3">
    <location>
        <position position="52"/>
    </location>
</feature>
<sequence>MTLVLVIDDEPQILRALRINLTVRGYQVITASTGAGALRAAAEHPPDVVILDLGLPDMSGIDVLGGLRGWLTAPVIVLSARTDSSDKVQALDAGADDYVTKPFGMDEFLARLRAAVRRNTAAAELEQPVIETDSFTVDLAGKKVIKDGAEVHLTPTEWGMLEMLARNRGKLVGRGELLKEVWGPAYATETHYLRVYLAQLRRKLEDDPSHPKHLLTESGMGYRFEA</sequence>
<keyword id="KW-0963">Cytoplasm</keyword>
<keyword id="KW-0238">DNA-binding</keyword>
<keyword id="KW-0597">Phosphoprotein</keyword>
<keyword id="KW-1185">Reference proteome</keyword>
<keyword id="KW-0804">Transcription</keyword>
<keyword id="KW-0805">Transcription regulation</keyword>
<keyword id="KW-0902">Two-component regulatory system</keyword>
<comment type="function">
    <text evidence="2">Member of the two-component regulatory system KdpD/KdpE involved in the regulation of the kdp operon. Upon phosphorylation by KdpD, functions as a transcription regulator by direct binding to promoter regions of target genes to positively regulate their expression.</text>
</comment>
<comment type="subcellular location">
    <subcellularLocation>
        <location evidence="1">Cytoplasm</location>
    </subcellularLocation>
</comment>
<comment type="PTM">
    <text evidence="2">Phosphorylated by KdpD.</text>
</comment>
<evidence type="ECO:0000250" key="1"/>
<evidence type="ECO:0000250" key="2">
    <source>
        <dbReference type="UniProtKB" id="P9WGN1"/>
    </source>
</evidence>
<evidence type="ECO:0000255" key="3">
    <source>
        <dbReference type="PROSITE-ProRule" id="PRU00169"/>
    </source>
</evidence>
<evidence type="ECO:0000255" key="4">
    <source>
        <dbReference type="PROSITE-ProRule" id="PRU01091"/>
    </source>
</evidence>
<protein>
    <recommendedName>
        <fullName>Transcriptional regulatory protein KdpE</fullName>
    </recommendedName>
</protein>
<gene>
    <name type="primary">kdpE</name>
    <name type="ordered locus">MT1056</name>
</gene>
<dbReference type="EMBL" id="AE000516">
    <property type="protein sequence ID" value="AAK45308.1"/>
    <property type="molecule type" value="Genomic_DNA"/>
</dbReference>
<dbReference type="PIR" id="F70623">
    <property type="entry name" value="F70623"/>
</dbReference>
<dbReference type="RefSeq" id="WP_003405305.1">
    <property type="nucleotide sequence ID" value="NZ_KK341227.1"/>
</dbReference>
<dbReference type="SMR" id="P9WGN0"/>
<dbReference type="GeneID" id="45424999"/>
<dbReference type="KEGG" id="mtc:MT1056"/>
<dbReference type="PATRIC" id="fig|83331.31.peg.1134"/>
<dbReference type="HOGENOM" id="CLU_000445_30_8_11"/>
<dbReference type="Proteomes" id="UP000001020">
    <property type="component" value="Chromosome"/>
</dbReference>
<dbReference type="GO" id="GO:0005829">
    <property type="term" value="C:cytosol"/>
    <property type="evidence" value="ECO:0007669"/>
    <property type="project" value="TreeGrafter"/>
</dbReference>
<dbReference type="GO" id="GO:0032993">
    <property type="term" value="C:protein-DNA complex"/>
    <property type="evidence" value="ECO:0007669"/>
    <property type="project" value="TreeGrafter"/>
</dbReference>
<dbReference type="GO" id="GO:0000156">
    <property type="term" value="F:phosphorelay response regulator activity"/>
    <property type="evidence" value="ECO:0007669"/>
    <property type="project" value="TreeGrafter"/>
</dbReference>
<dbReference type="GO" id="GO:0000976">
    <property type="term" value="F:transcription cis-regulatory region binding"/>
    <property type="evidence" value="ECO:0007669"/>
    <property type="project" value="TreeGrafter"/>
</dbReference>
<dbReference type="GO" id="GO:0006355">
    <property type="term" value="P:regulation of DNA-templated transcription"/>
    <property type="evidence" value="ECO:0007669"/>
    <property type="project" value="InterPro"/>
</dbReference>
<dbReference type="CDD" id="cd17620">
    <property type="entry name" value="REC_OmpR_KdpE-like"/>
    <property type="match status" value="1"/>
</dbReference>
<dbReference type="CDD" id="cd00383">
    <property type="entry name" value="trans_reg_C"/>
    <property type="match status" value="1"/>
</dbReference>
<dbReference type="FunFam" id="3.40.50.2300:FF:000021">
    <property type="entry name" value="Two-component system response regulator KdpE"/>
    <property type="match status" value="1"/>
</dbReference>
<dbReference type="FunFam" id="1.10.10.10:FF:000210">
    <property type="entry name" value="Winged-helix transcriptional response regulator KdpE"/>
    <property type="match status" value="1"/>
</dbReference>
<dbReference type="Gene3D" id="3.40.50.2300">
    <property type="match status" value="1"/>
</dbReference>
<dbReference type="Gene3D" id="6.10.250.690">
    <property type="match status" value="1"/>
</dbReference>
<dbReference type="Gene3D" id="1.10.10.10">
    <property type="entry name" value="Winged helix-like DNA-binding domain superfamily/Winged helix DNA-binding domain"/>
    <property type="match status" value="1"/>
</dbReference>
<dbReference type="InterPro" id="IPR011006">
    <property type="entry name" value="CheY-like_superfamily"/>
</dbReference>
<dbReference type="InterPro" id="IPR001867">
    <property type="entry name" value="OmpR/PhoB-type_DNA-bd"/>
</dbReference>
<dbReference type="InterPro" id="IPR001789">
    <property type="entry name" value="Sig_transdc_resp-reg_receiver"/>
</dbReference>
<dbReference type="InterPro" id="IPR039420">
    <property type="entry name" value="WalR-like"/>
</dbReference>
<dbReference type="InterPro" id="IPR036388">
    <property type="entry name" value="WH-like_DNA-bd_sf"/>
</dbReference>
<dbReference type="PANTHER" id="PTHR48111:SF50">
    <property type="entry name" value="KDP OPERON TRANSCRIPTIONAL REGULATORY PROTEIN KDPE"/>
    <property type="match status" value="1"/>
</dbReference>
<dbReference type="PANTHER" id="PTHR48111">
    <property type="entry name" value="REGULATOR OF RPOS"/>
    <property type="match status" value="1"/>
</dbReference>
<dbReference type="Pfam" id="PF00072">
    <property type="entry name" value="Response_reg"/>
    <property type="match status" value="1"/>
</dbReference>
<dbReference type="Pfam" id="PF00486">
    <property type="entry name" value="Trans_reg_C"/>
    <property type="match status" value="1"/>
</dbReference>
<dbReference type="SMART" id="SM00448">
    <property type="entry name" value="REC"/>
    <property type="match status" value="1"/>
</dbReference>
<dbReference type="SMART" id="SM00862">
    <property type="entry name" value="Trans_reg_C"/>
    <property type="match status" value="1"/>
</dbReference>
<dbReference type="SUPFAM" id="SSF52172">
    <property type="entry name" value="CheY-like"/>
    <property type="match status" value="1"/>
</dbReference>
<dbReference type="PROSITE" id="PS51755">
    <property type="entry name" value="OMPR_PHOB"/>
    <property type="match status" value="1"/>
</dbReference>
<dbReference type="PROSITE" id="PS50110">
    <property type="entry name" value="RESPONSE_REGULATORY"/>
    <property type="match status" value="1"/>
</dbReference>
<accession>P9WGN0</accession>
<accession>L0T8E7</accession>
<accession>P96373</accession>
<accession>Q7D8Z1</accession>
<name>KDPE_MYCTO</name>
<reference key="1">
    <citation type="journal article" date="2002" name="J. Bacteriol.">
        <title>Whole-genome comparison of Mycobacterium tuberculosis clinical and laboratory strains.</title>
        <authorList>
            <person name="Fleischmann R.D."/>
            <person name="Alland D."/>
            <person name="Eisen J.A."/>
            <person name="Carpenter L."/>
            <person name="White O."/>
            <person name="Peterson J.D."/>
            <person name="DeBoy R.T."/>
            <person name="Dodson R.J."/>
            <person name="Gwinn M.L."/>
            <person name="Haft D.H."/>
            <person name="Hickey E.K."/>
            <person name="Kolonay J.F."/>
            <person name="Nelson W.C."/>
            <person name="Umayam L.A."/>
            <person name="Ermolaeva M.D."/>
            <person name="Salzberg S.L."/>
            <person name="Delcher A."/>
            <person name="Utterback T.R."/>
            <person name="Weidman J.F."/>
            <person name="Khouri H.M."/>
            <person name="Gill J."/>
            <person name="Mikula A."/>
            <person name="Bishai W."/>
            <person name="Jacobs W.R. Jr."/>
            <person name="Venter J.C."/>
            <person name="Fraser C.M."/>
        </authorList>
    </citation>
    <scope>NUCLEOTIDE SEQUENCE [LARGE SCALE GENOMIC DNA]</scope>
    <source>
        <strain>CDC 1551 / Oshkosh</strain>
    </source>
</reference>
<organism>
    <name type="scientific">Mycobacterium tuberculosis (strain CDC 1551 / Oshkosh)</name>
    <dbReference type="NCBI Taxonomy" id="83331"/>
    <lineage>
        <taxon>Bacteria</taxon>
        <taxon>Bacillati</taxon>
        <taxon>Actinomycetota</taxon>
        <taxon>Actinomycetes</taxon>
        <taxon>Mycobacteriales</taxon>
        <taxon>Mycobacteriaceae</taxon>
        <taxon>Mycobacterium</taxon>
        <taxon>Mycobacterium tuberculosis complex</taxon>
    </lineage>
</organism>